<proteinExistence type="evidence at protein level"/>
<evidence type="ECO:0000250" key="1">
    <source>
        <dbReference type="UniProtKB" id="Q9R1K7"/>
    </source>
</evidence>
<evidence type="ECO:0000255" key="2"/>
<evidence type="ECO:0000269" key="3">
    <source>
    </source>
</evidence>
<evidence type="ECO:0000269" key="4">
    <source>
    </source>
</evidence>
<evidence type="ECO:0000303" key="5">
    <source>
    </source>
</evidence>
<evidence type="ECO:0000303" key="6">
    <source>
    </source>
</evidence>
<evidence type="ECO:0000303" key="7">
    <source>
    </source>
</evidence>
<evidence type="ECO:0000305" key="8"/>
<organism>
    <name type="scientific">Homo sapiens</name>
    <name type="common">Human</name>
    <dbReference type="NCBI Taxonomy" id="9606"/>
    <lineage>
        <taxon>Eukaryota</taxon>
        <taxon>Metazoa</taxon>
        <taxon>Chordata</taxon>
        <taxon>Craniata</taxon>
        <taxon>Vertebrata</taxon>
        <taxon>Euteleostomi</taxon>
        <taxon>Mammalia</taxon>
        <taxon>Eutheria</taxon>
        <taxon>Euarchontoglires</taxon>
        <taxon>Primates</taxon>
        <taxon>Haplorrhini</taxon>
        <taxon>Catarrhini</taxon>
        <taxon>Hominidae</taxon>
        <taxon>Homo</taxon>
    </lineage>
</organism>
<protein>
    <recommendedName>
        <fullName>Tubulin delta chain</fullName>
    </recommendedName>
    <alternativeName>
        <fullName>Delta-tubulin</fullName>
    </alternativeName>
</protein>
<gene>
    <name type="primary">TUBD1</name>
    <name type="synonym">TUBD</name>
</gene>
<accession>Q9UJT1</accession>
<accession>B4DPT8</accession>
<accession>B4DW01</accession>
<accession>D3DU02</accession>
<accession>E9PCA7</accession>
<accession>E9PCQ8</accession>
<accession>Q5KU36</accession>
<accession>Q9BWG9</accession>
<accession>Q9H7Z8</accession>
<reference key="1">
    <citation type="journal article" date="2000" name="Nat. Cell Biol.">
        <title>Delta-tubulin and epsilon-tubulin: two new human centrosomal tubulins reveal new aspects of centrosome structure and function.</title>
        <authorList>
            <person name="Chang P."/>
            <person name="Stearns T."/>
        </authorList>
    </citation>
    <scope>NUCLEOTIDE SEQUENCE [MRNA] (ISOFORM 1)</scope>
    <scope>VARIANT THR-76</scope>
</reference>
<reference key="2">
    <citation type="journal article" date="2004" name="Dev. Biol.">
        <title>Delta-tubulin is a component of intercellular bridges and both the early and mature perinuclear rings during spermatogenesis.</title>
        <authorList>
            <person name="Kato A."/>
            <person name="Nagata Y."/>
            <person name="Todokoro K."/>
        </authorList>
    </citation>
    <scope>NUCLEOTIDE SEQUENCE [MRNA] (ISOFORMS 1 AND 6)</scope>
    <scope>VARIANT THR-76</scope>
</reference>
<reference key="3">
    <citation type="journal article" date="2004" name="Nat. Genet.">
        <title>Complete sequencing and characterization of 21,243 full-length human cDNAs.</title>
        <authorList>
            <person name="Ota T."/>
            <person name="Suzuki Y."/>
            <person name="Nishikawa T."/>
            <person name="Otsuki T."/>
            <person name="Sugiyama T."/>
            <person name="Irie R."/>
            <person name="Wakamatsu A."/>
            <person name="Hayashi K."/>
            <person name="Sato H."/>
            <person name="Nagai K."/>
            <person name="Kimura K."/>
            <person name="Makita H."/>
            <person name="Sekine M."/>
            <person name="Obayashi M."/>
            <person name="Nishi T."/>
            <person name="Shibahara T."/>
            <person name="Tanaka T."/>
            <person name="Ishii S."/>
            <person name="Yamamoto J."/>
            <person name="Saito K."/>
            <person name="Kawai Y."/>
            <person name="Isono Y."/>
            <person name="Nakamura Y."/>
            <person name="Nagahari K."/>
            <person name="Murakami K."/>
            <person name="Yasuda T."/>
            <person name="Iwayanagi T."/>
            <person name="Wagatsuma M."/>
            <person name="Shiratori A."/>
            <person name="Sudo H."/>
            <person name="Hosoiri T."/>
            <person name="Kaku Y."/>
            <person name="Kodaira H."/>
            <person name="Kondo H."/>
            <person name="Sugawara M."/>
            <person name="Takahashi M."/>
            <person name="Kanda K."/>
            <person name="Yokoi T."/>
            <person name="Furuya T."/>
            <person name="Kikkawa E."/>
            <person name="Omura Y."/>
            <person name="Abe K."/>
            <person name="Kamihara K."/>
            <person name="Katsuta N."/>
            <person name="Sato K."/>
            <person name="Tanikawa M."/>
            <person name="Yamazaki M."/>
            <person name="Ninomiya K."/>
            <person name="Ishibashi T."/>
            <person name="Yamashita H."/>
            <person name="Murakawa K."/>
            <person name="Fujimori K."/>
            <person name="Tanai H."/>
            <person name="Kimata M."/>
            <person name="Watanabe M."/>
            <person name="Hiraoka S."/>
            <person name="Chiba Y."/>
            <person name="Ishida S."/>
            <person name="Ono Y."/>
            <person name="Takiguchi S."/>
            <person name="Watanabe S."/>
            <person name="Yosida M."/>
            <person name="Hotuta T."/>
            <person name="Kusano J."/>
            <person name="Kanehori K."/>
            <person name="Takahashi-Fujii A."/>
            <person name="Hara H."/>
            <person name="Tanase T.-O."/>
            <person name="Nomura Y."/>
            <person name="Togiya S."/>
            <person name="Komai F."/>
            <person name="Hara R."/>
            <person name="Takeuchi K."/>
            <person name="Arita M."/>
            <person name="Imose N."/>
            <person name="Musashino K."/>
            <person name="Yuuki H."/>
            <person name="Oshima A."/>
            <person name="Sasaki N."/>
            <person name="Aotsuka S."/>
            <person name="Yoshikawa Y."/>
            <person name="Matsunawa H."/>
            <person name="Ichihara T."/>
            <person name="Shiohata N."/>
            <person name="Sano S."/>
            <person name="Moriya S."/>
            <person name="Momiyama H."/>
            <person name="Satoh N."/>
            <person name="Takami S."/>
            <person name="Terashima Y."/>
            <person name="Suzuki O."/>
            <person name="Nakagawa S."/>
            <person name="Senoh A."/>
            <person name="Mizoguchi H."/>
            <person name="Goto Y."/>
            <person name="Shimizu F."/>
            <person name="Wakebe H."/>
            <person name="Hishigaki H."/>
            <person name="Watanabe T."/>
            <person name="Sugiyama A."/>
            <person name="Takemoto M."/>
            <person name="Kawakami B."/>
            <person name="Yamazaki M."/>
            <person name="Watanabe K."/>
            <person name="Kumagai A."/>
            <person name="Itakura S."/>
            <person name="Fukuzumi Y."/>
            <person name="Fujimori Y."/>
            <person name="Komiyama M."/>
            <person name="Tashiro H."/>
            <person name="Tanigami A."/>
            <person name="Fujiwara T."/>
            <person name="Ono T."/>
            <person name="Yamada K."/>
            <person name="Fujii Y."/>
            <person name="Ozaki K."/>
            <person name="Hirao M."/>
            <person name="Ohmori Y."/>
            <person name="Kawabata A."/>
            <person name="Hikiji T."/>
            <person name="Kobatake N."/>
            <person name="Inagaki H."/>
            <person name="Ikema Y."/>
            <person name="Okamoto S."/>
            <person name="Okitani R."/>
            <person name="Kawakami T."/>
            <person name="Noguchi S."/>
            <person name="Itoh T."/>
            <person name="Shigeta K."/>
            <person name="Senba T."/>
            <person name="Matsumura K."/>
            <person name="Nakajima Y."/>
            <person name="Mizuno T."/>
            <person name="Morinaga M."/>
            <person name="Sasaki M."/>
            <person name="Togashi T."/>
            <person name="Oyama M."/>
            <person name="Hata H."/>
            <person name="Watanabe M."/>
            <person name="Komatsu T."/>
            <person name="Mizushima-Sugano J."/>
            <person name="Satoh T."/>
            <person name="Shirai Y."/>
            <person name="Takahashi Y."/>
            <person name="Nakagawa K."/>
            <person name="Okumura K."/>
            <person name="Nagase T."/>
            <person name="Nomura N."/>
            <person name="Kikuchi H."/>
            <person name="Masuho Y."/>
            <person name="Yamashita R."/>
            <person name="Nakai K."/>
            <person name="Yada T."/>
            <person name="Nakamura Y."/>
            <person name="Ohara O."/>
            <person name="Isogai T."/>
            <person name="Sugano S."/>
        </authorList>
    </citation>
    <scope>NUCLEOTIDE SEQUENCE [LARGE SCALE MRNA] (ISOFORMS 3; 4 AND 5)</scope>
    <source>
        <tissue>Embryo</tissue>
        <tissue>Mammary gland</tissue>
        <tissue>Stomach</tissue>
    </source>
</reference>
<reference key="4">
    <citation type="journal article" date="2006" name="Nature">
        <title>DNA sequence of human chromosome 17 and analysis of rearrangement in the human lineage.</title>
        <authorList>
            <person name="Zody M.C."/>
            <person name="Garber M."/>
            <person name="Adams D.J."/>
            <person name="Sharpe T."/>
            <person name="Harrow J."/>
            <person name="Lupski J.R."/>
            <person name="Nicholson C."/>
            <person name="Searle S.M."/>
            <person name="Wilming L."/>
            <person name="Young S.K."/>
            <person name="Abouelleil A."/>
            <person name="Allen N.R."/>
            <person name="Bi W."/>
            <person name="Bloom T."/>
            <person name="Borowsky M.L."/>
            <person name="Bugalter B.E."/>
            <person name="Butler J."/>
            <person name="Chang J.L."/>
            <person name="Chen C.-K."/>
            <person name="Cook A."/>
            <person name="Corum B."/>
            <person name="Cuomo C.A."/>
            <person name="de Jong P.J."/>
            <person name="DeCaprio D."/>
            <person name="Dewar K."/>
            <person name="FitzGerald M."/>
            <person name="Gilbert J."/>
            <person name="Gibson R."/>
            <person name="Gnerre S."/>
            <person name="Goldstein S."/>
            <person name="Grafham D.V."/>
            <person name="Grocock R."/>
            <person name="Hafez N."/>
            <person name="Hagopian D.S."/>
            <person name="Hart E."/>
            <person name="Norman C.H."/>
            <person name="Humphray S."/>
            <person name="Jaffe D.B."/>
            <person name="Jones M."/>
            <person name="Kamal M."/>
            <person name="Khodiyar V.K."/>
            <person name="LaButti K."/>
            <person name="Laird G."/>
            <person name="Lehoczky J."/>
            <person name="Liu X."/>
            <person name="Lokyitsang T."/>
            <person name="Loveland J."/>
            <person name="Lui A."/>
            <person name="Macdonald P."/>
            <person name="Major J.E."/>
            <person name="Matthews L."/>
            <person name="Mauceli E."/>
            <person name="McCarroll S.A."/>
            <person name="Mihalev A.H."/>
            <person name="Mudge J."/>
            <person name="Nguyen C."/>
            <person name="Nicol R."/>
            <person name="O'Leary S.B."/>
            <person name="Osoegawa K."/>
            <person name="Schwartz D.C."/>
            <person name="Shaw-Smith C."/>
            <person name="Stankiewicz P."/>
            <person name="Steward C."/>
            <person name="Swarbreck D."/>
            <person name="Venkataraman V."/>
            <person name="Whittaker C.A."/>
            <person name="Yang X."/>
            <person name="Zimmer A.R."/>
            <person name="Bradley A."/>
            <person name="Hubbard T."/>
            <person name="Birren B.W."/>
            <person name="Rogers J."/>
            <person name="Lander E.S."/>
            <person name="Nusbaum C."/>
        </authorList>
    </citation>
    <scope>NUCLEOTIDE SEQUENCE [LARGE SCALE GENOMIC DNA]</scope>
</reference>
<reference key="5">
    <citation type="submission" date="2005-09" db="EMBL/GenBank/DDBJ databases">
        <authorList>
            <person name="Mural R.J."/>
            <person name="Istrail S."/>
            <person name="Sutton G.G."/>
            <person name="Florea L."/>
            <person name="Halpern A.L."/>
            <person name="Mobarry C.M."/>
            <person name="Lippert R."/>
            <person name="Walenz B."/>
            <person name="Shatkay H."/>
            <person name="Dew I."/>
            <person name="Miller J.R."/>
            <person name="Flanigan M.J."/>
            <person name="Edwards N.J."/>
            <person name="Bolanos R."/>
            <person name="Fasulo D."/>
            <person name="Halldorsson B.V."/>
            <person name="Hannenhalli S."/>
            <person name="Turner R."/>
            <person name="Yooseph S."/>
            <person name="Lu F."/>
            <person name="Nusskern D.R."/>
            <person name="Shue B.C."/>
            <person name="Zheng X.H."/>
            <person name="Zhong F."/>
            <person name="Delcher A.L."/>
            <person name="Huson D.H."/>
            <person name="Kravitz S.A."/>
            <person name="Mouchard L."/>
            <person name="Reinert K."/>
            <person name="Remington K.A."/>
            <person name="Clark A.G."/>
            <person name="Waterman M.S."/>
            <person name="Eichler E.E."/>
            <person name="Adams M.D."/>
            <person name="Hunkapiller M.W."/>
            <person name="Myers E.W."/>
            <person name="Venter J.C."/>
        </authorList>
    </citation>
    <scope>NUCLEOTIDE SEQUENCE [LARGE SCALE GENOMIC DNA]</scope>
</reference>
<reference key="6">
    <citation type="journal article" date="2004" name="Genome Res.">
        <title>The status, quality, and expansion of the NIH full-length cDNA project: the Mammalian Gene Collection (MGC).</title>
        <authorList>
            <consortium name="The MGC Project Team"/>
        </authorList>
    </citation>
    <scope>NUCLEOTIDE SEQUENCE [LARGE SCALE MRNA] (ISOFORM 2)</scope>
    <source>
        <tissue>Eye</tissue>
    </source>
</reference>
<name>TBD_HUMAN</name>
<keyword id="KW-0025">Alternative splicing</keyword>
<keyword id="KW-0966">Cell projection</keyword>
<keyword id="KW-0970">Cilium biogenesis/degradation</keyword>
<keyword id="KW-0963">Cytoplasm</keyword>
<keyword id="KW-0206">Cytoskeleton</keyword>
<keyword id="KW-0217">Developmental protein</keyword>
<keyword id="KW-0342">GTP-binding</keyword>
<keyword id="KW-0493">Microtubule</keyword>
<keyword id="KW-0547">Nucleotide-binding</keyword>
<keyword id="KW-0539">Nucleus</keyword>
<keyword id="KW-1267">Proteomics identification</keyword>
<keyword id="KW-1185">Reference proteome</keyword>
<dbReference type="EMBL" id="AF201333">
    <property type="protein sequence ID" value="AAF09584.1"/>
    <property type="molecule type" value="mRNA"/>
</dbReference>
<dbReference type="EMBL" id="AB030837">
    <property type="protein sequence ID" value="BAD16590.1"/>
    <property type="molecule type" value="mRNA"/>
</dbReference>
<dbReference type="EMBL" id="AB031045">
    <property type="protein sequence ID" value="BAD83581.1"/>
    <property type="molecule type" value="mRNA"/>
</dbReference>
<dbReference type="EMBL" id="AK024096">
    <property type="protein sequence ID" value="BAB14825.1"/>
    <property type="molecule type" value="mRNA"/>
</dbReference>
<dbReference type="EMBL" id="AK298492">
    <property type="protein sequence ID" value="BAG60700.1"/>
    <property type="molecule type" value="mRNA"/>
</dbReference>
<dbReference type="EMBL" id="AK301312">
    <property type="protein sequence ID" value="BAG62863.1"/>
    <property type="molecule type" value="mRNA"/>
</dbReference>
<dbReference type="EMBL" id="AC004686">
    <property type="status" value="NOT_ANNOTATED_CDS"/>
    <property type="molecule type" value="Genomic_DNA"/>
</dbReference>
<dbReference type="EMBL" id="CH471109">
    <property type="protein sequence ID" value="EAW94385.1"/>
    <property type="molecule type" value="Genomic_DNA"/>
</dbReference>
<dbReference type="EMBL" id="CH471109">
    <property type="protein sequence ID" value="EAW94387.1"/>
    <property type="molecule type" value="Genomic_DNA"/>
</dbReference>
<dbReference type="EMBL" id="BC000258">
    <property type="protein sequence ID" value="AAH00258.1"/>
    <property type="molecule type" value="mRNA"/>
</dbReference>
<dbReference type="CCDS" id="CCDS11620.1">
    <molecule id="Q9UJT1-1"/>
</dbReference>
<dbReference type="CCDS" id="CCDS54151.1">
    <molecule id="Q9UJT1-4"/>
</dbReference>
<dbReference type="CCDS" id="CCDS54152.1">
    <molecule id="Q9UJT1-6"/>
</dbReference>
<dbReference type="CCDS" id="CCDS54153.1">
    <molecule id="Q9UJT1-2"/>
</dbReference>
<dbReference type="CCDS" id="CCDS54154.1">
    <molecule id="Q9UJT1-5"/>
</dbReference>
<dbReference type="RefSeq" id="NP_001180538.1">
    <molecule id="Q9UJT1-2"/>
    <property type="nucleotide sequence ID" value="NM_001193609.2"/>
</dbReference>
<dbReference type="RefSeq" id="NP_001180539.1">
    <molecule id="Q9UJT1-5"/>
    <property type="nucleotide sequence ID" value="NM_001193610.2"/>
</dbReference>
<dbReference type="RefSeq" id="NP_001180540.1">
    <molecule id="Q9UJT1-6"/>
    <property type="nucleotide sequence ID" value="NM_001193611.2"/>
</dbReference>
<dbReference type="RefSeq" id="NP_001180541.1">
    <property type="nucleotide sequence ID" value="NM_001193612.1"/>
</dbReference>
<dbReference type="RefSeq" id="NP_001180542.1">
    <molecule id="Q9UJT1-4"/>
    <property type="nucleotide sequence ID" value="NM_001193613.2"/>
</dbReference>
<dbReference type="RefSeq" id="NP_057345.2">
    <molecule id="Q9UJT1-1"/>
    <property type="nucleotide sequence ID" value="NM_016261.4"/>
</dbReference>
<dbReference type="SMR" id="Q9UJT1"/>
<dbReference type="BioGRID" id="119352">
    <property type="interactions" value="31"/>
</dbReference>
<dbReference type="FunCoup" id="Q9UJT1">
    <property type="interactions" value="1135"/>
</dbReference>
<dbReference type="IntAct" id="Q9UJT1">
    <property type="interactions" value="22"/>
</dbReference>
<dbReference type="STRING" id="9606.ENSP00000320797"/>
<dbReference type="DrugBank" id="DB00570">
    <property type="generic name" value="Vinblastine"/>
</dbReference>
<dbReference type="iPTMnet" id="Q9UJT1"/>
<dbReference type="PhosphoSitePlus" id="Q9UJT1"/>
<dbReference type="BioMuta" id="TUBD1"/>
<dbReference type="DMDM" id="124056483"/>
<dbReference type="jPOST" id="Q9UJT1"/>
<dbReference type="MassIVE" id="Q9UJT1"/>
<dbReference type="PaxDb" id="9606-ENSP00000320797"/>
<dbReference type="PeptideAtlas" id="Q9UJT1"/>
<dbReference type="ProteomicsDB" id="19408"/>
<dbReference type="ProteomicsDB" id="19495"/>
<dbReference type="ProteomicsDB" id="5305"/>
<dbReference type="ProteomicsDB" id="84644">
    <molecule id="Q9UJT1-1"/>
</dbReference>
<dbReference type="ProteomicsDB" id="84645">
    <molecule id="Q9UJT1-2"/>
</dbReference>
<dbReference type="ProteomicsDB" id="84646">
    <molecule id="Q9UJT1-3"/>
</dbReference>
<dbReference type="Pumba" id="Q9UJT1"/>
<dbReference type="Antibodypedia" id="3899">
    <property type="antibodies" value="134 antibodies from 24 providers"/>
</dbReference>
<dbReference type="DNASU" id="51174"/>
<dbReference type="Ensembl" id="ENST00000325752.8">
    <molecule id="Q9UJT1-1"/>
    <property type="protein sequence ID" value="ENSP00000320797.3"/>
    <property type="gene ID" value="ENSG00000108423.16"/>
</dbReference>
<dbReference type="Ensembl" id="ENST00000340993.10">
    <molecule id="Q9UJT1-2"/>
    <property type="protein sequence ID" value="ENSP00000342399.5"/>
    <property type="gene ID" value="ENSG00000108423.16"/>
</dbReference>
<dbReference type="Ensembl" id="ENST00000346141.10">
    <molecule id="Q9UJT1-3"/>
    <property type="protein sequence ID" value="ENSP00000342561.5"/>
    <property type="gene ID" value="ENSG00000108423.16"/>
</dbReference>
<dbReference type="Ensembl" id="ENST00000376094.8">
    <molecule id="Q9UJT1-6"/>
    <property type="protein sequence ID" value="ENSP00000365262.4"/>
    <property type="gene ID" value="ENSG00000108423.16"/>
</dbReference>
<dbReference type="Ensembl" id="ENST00000394239.7">
    <molecule id="Q9UJT1-5"/>
    <property type="protein sequence ID" value="ENSP00000377785.3"/>
    <property type="gene ID" value="ENSG00000108423.16"/>
</dbReference>
<dbReference type="Ensembl" id="ENST00000539018.5">
    <molecule id="Q9UJT1-4"/>
    <property type="protein sequence ID" value="ENSP00000441757.1"/>
    <property type="gene ID" value="ENSG00000108423.16"/>
</dbReference>
<dbReference type="Ensembl" id="ENST00000592426.5">
    <molecule id="Q9UJT1-1"/>
    <property type="protein sequence ID" value="ENSP00000468518.1"/>
    <property type="gene ID" value="ENSG00000108423.16"/>
</dbReference>
<dbReference type="Ensembl" id="ENST00000613721.4">
    <molecule id="Q9UJT1-6"/>
    <property type="protein sequence ID" value="ENSP00000480387.1"/>
    <property type="gene ID" value="ENSG00000108423.16"/>
</dbReference>
<dbReference type="GeneID" id="51174"/>
<dbReference type="KEGG" id="hsa:51174"/>
<dbReference type="MANE-Select" id="ENST00000325752.8">
    <property type="protein sequence ID" value="ENSP00000320797.3"/>
    <property type="RefSeq nucleotide sequence ID" value="NM_016261.4"/>
    <property type="RefSeq protein sequence ID" value="NP_057345.2"/>
</dbReference>
<dbReference type="UCSC" id="uc002ixw.3">
    <molecule id="Q9UJT1-1"/>
    <property type="organism name" value="human"/>
</dbReference>
<dbReference type="AGR" id="HGNC:16811"/>
<dbReference type="CTD" id="51174"/>
<dbReference type="DisGeNET" id="51174"/>
<dbReference type="GeneCards" id="TUBD1"/>
<dbReference type="HGNC" id="HGNC:16811">
    <property type="gene designation" value="TUBD1"/>
</dbReference>
<dbReference type="HPA" id="ENSG00000108423">
    <property type="expression patterns" value="Low tissue specificity"/>
</dbReference>
<dbReference type="MIM" id="607344">
    <property type="type" value="gene"/>
</dbReference>
<dbReference type="neXtProt" id="NX_Q9UJT1"/>
<dbReference type="OpenTargets" id="ENSG00000108423"/>
<dbReference type="PharmGKB" id="PA134909953"/>
<dbReference type="VEuPathDB" id="HostDB:ENSG00000108423"/>
<dbReference type="eggNOG" id="KOG1374">
    <property type="taxonomic scope" value="Eukaryota"/>
</dbReference>
<dbReference type="GeneTree" id="ENSGT00940000157069"/>
<dbReference type="HOGENOM" id="CLU_1371783_0_0_1"/>
<dbReference type="InParanoid" id="Q9UJT1"/>
<dbReference type="OMA" id="ACHPEYK"/>
<dbReference type="OrthoDB" id="10250004at2759"/>
<dbReference type="PAN-GO" id="Q9UJT1">
    <property type="GO annotations" value="6 GO annotations based on evolutionary models"/>
</dbReference>
<dbReference type="PhylomeDB" id="Q9UJT1"/>
<dbReference type="TreeFam" id="TF329833"/>
<dbReference type="PathwayCommons" id="Q9UJT1"/>
<dbReference type="SignaLink" id="Q9UJT1"/>
<dbReference type="SIGNOR" id="Q9UJT1"/>
<dbReference type="BioGRID-ORCS" id="51174">
    <property type="hits" value="228 hits in 1169 CRISPR screens"/>
</dbReference>
<dbReference type="CD-CODE" id="8C2F96ED">
    <property type="entry name" value="Centrosome"/>
</dbReference>
<dbReference type="ChiTaRS" id="TUBD1">
    <property type="organism name" value="human"/>
</dbReference>
<dbReference type="GeneWiki" id="TUBD1"/>
<dbReference type="GenomeRNAi" id="51174"/>
<dbReference type="Pharos" id="Q9UJT1">
    <property type="development level" value="Tbio"/>
</dbReference>
<dbReference type="PRO" id="PR:Q9UJT1"/>
<dbReference type="Proteomes" id="UP000005640">
    <property type="component" value="Chromosome 17"/>
</dbReference>
<dbReference type="RNAct" id="Q9UJT1">
    <property type="molecule type" value="protein"/>
</dbReference>
<dbReference type="Bgee" id="ENSG00000108423">
    <property type="expression patterns" value="Expressed in secondary oocyte and 176 other cell types or tissues"/>
</dbReference>
<dbReference type="ExpressionAtlas" id="Q9UJT1">
    <property type="expression patterns" value="baseline and differential"/>
</dbReference>
<dbReference type="GO" id="GO:0005814">
    <property type="term" value="C:centriole"/>
    <property type="evidence" value="ECO:0000304"/>
    <property type="project" value="ProtInc"/>
</dbReference>
<dbReference type="GO" id="GO:0005929">
    <property type="term" value="C:cilium"/>
    <property type="evidence" value="ECO:0007669"/>
    <property type="project" value="UniProtKB-SubCell"/>
</dbReference>
<dbReference type="GO" id="GO:0005737">
    <property type="term" value="C:cytoplasm"/>
    <property type="evidence" value="ECO:0000318"/>
    <property type="project" value="GO_Central"/>
</dbReference>
<dbReference type="GO" id="GO:0005829">
    <property type="term" value="C:cytosol"/>
    <property type="evidence" value="ECO:0000314"/>
    <property type="project" value="HPA"/>
</dbReference>
<dbReference type="GO" id="GO:0005874">
    <property type="term" value="C:microtubule"/>
    <property type="evidence" value="ECO:0000318"/>
    <property type="project" value="GO_Central"/>
</dbReference>
<dbReference type="GO" id="GO:0005654">
    <property type="term" value="C:nucleoplasm"/>
    <property type="evidence" value="ECO:0000314"/>
    <property type="project" value="HPA"/>
</dbReference>
<dbReference type="GO" id="GO:0005525">
    <property type="term" value="F:GTP binding"/>
    <property type="evidence" value="ECO:0000318"/>
    <property type="project" value="GO_Central"/>
</dbReference>
<dbReference type="GO" id="GO:0005200">
    <property type="term" value="F:structural constituent of cytoskeleton"/>
    <property type="evidence" value="ECO:0000318"/>
    <property type="project" value="GO_Central"/>
</dbReference>
<dbReference type="GO" id="GO:0030030">
    <property type="term" value="P:cell projection organization"/>
    <property type="evidence" value="ECO:0007669"/>
    <property type="project" value="UniProtKB-KW"/>
</dbReference>
<dbReference type="GO" id="GO:0000226">
    <property type="term" value="P:microtubule cytoskeleton organization"/>
    <property type="evidence" value="ECO:0000318"/>
    <property type="project" value="GO_Central"/>
</dbReference>
<dbReference type="GO" id="GO:0000278">
    <property type="term" value="P:mitotic cell cycle"/>
    <property type="evidence" value="ECO:0000318"/>
    <property type="project" value="GO_Central"/>
</dbReference>
<dbReference type="GO" id="GO:0045880">
    <property type="term" value="P:positive regulation of smoothened signaling pathway"/>
    <property type="evidence" value="ECO:0000250"/>
    <property type="project" value="UniProtKB"/>
</dbReference>
<dbReference type="CDD" id="cd02189">
    <property type="entry name" value="delta_zeta_tubulin-like"/>
    <property type="match status" value="1"/>
</dbReference>
<dbReference type="FunFam" id="1.10.287.600:FF:000010">
    <property type="entry name" value="Tubulin delta chain"/>
    <property type="match status" value="1"/>
</dbReference>
<dbReference type="FunFam" id="3.40.50.1440:FF:000021">
    <property type="entry name" value="Tubulin delta chain"/>
    <property type="match status" value="1"/>
</dbReference>
<dbReference type="Gene3D" id="1.10.287.600">
    <property type="entry name" value="Helix hairpin bin"/>
    <property type="match status" value="1"/>
</dbReference>
<dbReference type="Gene3D" id="3.40.50.1440">
    <property type="entry name" value="Tubulin/FtsZ, GTPase domain"/>
    <property type="match status" value="1"/>
</dbReference>
<dbReference type="InterPro" id="IPR002967">
    <property type="entry name" value="Delta_tubulin"/>
</dbReference>
<dbReference type="InterPro" id="IPR008280">
    <property type="entry name" value="Tub_FtsZ_C"/>
</dbReference>
<dbReference type="InterPro" id="IPR000217">
    <property type="entry name" value="Tubulin"/>
</dbReference>
<dbReference type="InterPro" id="IPR036525">
    <property type="entry name" value="Tubulin/FtsZ_GTPase_sf"/>
</dbReference>
<dbReference type="InterPro" id="IPR023123">
    <property type="entry name" value="Tubulin_C"/>
</dbReference>
<dbReference type="InterPro" id="IPR017975">
    <property type="entry name" value="Tubulin_CS"/>
</dbReference>
<dbReference type="InterPro" id="IPR003008">
    <property type="entry name" value="Tubulin_FtsZ_GTPase"/>
</dbReference>
<dbReference type="PANTHER" id="PTHR11588">
    <property type="entry name" value="TUBULIN"/>
    <property type="match status" value="1"/>
</dbReference>
<dbReference type="Pfam" id="PF00091">
    <property type="entry name" value="Tubulin"/>
    <property type="match status" value="1"/>
</dbReference>
<dbReference type="PRINTS" id="PR01224">
    <property type="entry name" value="DELTATUBULIN"/>
</dbReference>
<dbReference type="PRINTS" id="PR01161">
    <property type="entry name" value="TUBULIN"/>
</dbReference>
<dbReference type="SMART" id="SM00864">
    <property type="entry name" value="Tubulin"/>
    <property type="match status" value="1"/>
</dbReference>
<dbReference type="SUPFAM" id="SSF55307">
    <property type="entry name" value="Tubulin C-terminal domain-like"/>
    <property type="match status" value="1"/>
</dbReference>
<dbReference type="SUPFAM" id="SSF52490">
    <property type="entry name" value="Tubulin nucleotide-binding domain-like"/>
    <property type="match status" value="1"/>
</dbReference>
<dbReference type="PROSITE" id="PS00227">
    <property type="entry name" value="TUBULIN"/>
    <property type="match status" value="1"/>
</dbReference>
<sequence length="453" mass="51034">MSIVTVQLGQCGNQIGFEVFDALLSDSHSSQGLCSMRENEAYQASCKERFFSEEENGVPIARAVLVDMEPKVINQMLSKAAQSGQWKYGQHACFCQKQGSGNNWAYGYSVHGPRHEESIMNIIRKEVEKCDSFSGFFIIMSMAGGTGSGLGAFVTQNLEDQYSNSLKMNQIIWPYGTGEVIVQNYNSILTLSHLYRSSDALLLHENDAIHKICAKLMNIKQISFSDINQVLAHQLGSVFQPTYSAESSFHYRRNPLGDLMEHLVPHPEFKMLSVRNIPHMSENSLAYTTFTWAGLLKHLRQMLISNAKMEEGIDRHVWPPLSGLPPLSKMSLNKDLHFNTSIANLVILRGKDVQSADVEGFKDPALYTSWLKPVNAFNVWKTQRAFSKYEKSAVLVSNSQFLVKPLDMIVGKAWNMFASKAYIHQYTKFGIEEEDFLDSFTSLEQVVASYCNL</sequence>
<comment type="function">
    <text evidence="1">Acts as a positive regulator of hedgehog signaling and regulates ciliary function.</text>
</comment>
<comment type="subunit">
    <text evidence="1">Found in a complex with TEDC1, TEDC2, TUBE1 and TUBD1.</text>
</comment>
<comment type="interaction">
    <interactant intactId="EBI-11280109">
        <id>Q9UJT1</id>
    </interactant>
    <interactant intactId="EBI-2479962">
        <id>Q92526</id>
        <label>CCT6B</label>
    </interactant>
    <organismsDiffer>false</organismsDiffer>
    <experiments>2</experiments>
</comment>
<comment type="subcellular location">
    <subcellularLocation>
        <location evidence="1">Nucleus</location>
    </subcellularLocation>
    <subcellularLocation>
        <location evidence="1">Cytoplasm</location>
    </subcellularLocation>
    <subcellularLocation>
        <location evidence="1">Cytoplasm</location>
        <location evidence="1">Cytoskeleton</location>
        <location evidence="1">Microtubule organizing center</location>
        <location evidence="1">Centrosome</location>
        <location evidence="1">Centriole</location>
    </subcellularLocation>
    <subcellularLocation>
        <location evidence="1">Cell projection</location>
        <location evidence="1">Cilium</location>
    </subcellularLocation>
    <text evidence="1">Associated with centrioles. Both cytoplasmic and nuclear. In the elongating spermatid it is associated with the manchette, a specialized microtubule system present during reshaping of the sperm head.</text>
</comment>
<comment type="alternative products">
    <event type="alternative splicing"/>
    <isoform>
        <id>Q9UJT1-1</id>
        <name>1</name>
        <sequence type="displayed"/>
    </isoform>
    <isoform>
        <id>Q9UJT1-2</id>
        <name>2</name>
        <sequence type="described" ref="VSP_006681"/>
    </isoform>
    <isoform>
        <id>Q9UJT1-3</id>
        <name>3</name>
        <sequence type="described" ref="VSP_006680"/>
    </isoform>
    <isoform>
        <id>Q9UJT1-4</id>
        <name>4</name>
        <sequence type="described" ref="VSP_045196"/>
    </isoform>
    <isoform>
        <id>Q9UJT1-5</id>
        <name>5</name>
        <sequence type="described" ref="VSP_046950"/>
    </isoform>
    <isoform>
        <id>Q9UJT1-6</id>
        <name>6</name>
        <sequence type="described" ref="VSP_046949"/>
    </isoform>
    <text>Experimental confirmation may be lacking for some isoforms.</text>
</comment>
<comment type="similarity">
    <text evidence="8">Belongs to the tubulin family.</text>
</comment>
<feature type="chain" id="PRO_0000048484" description="Tubulin delta chain">
    <location>
        <begin position="1"/>
        <end position="453"/>
    </location>
</feature>
<feature type="binding site" evidence="2">
    <location>
        <begin position="143"/>
        <end position="149"/>
    </location>
    <ligand>
        <name>GTP</name>
        <dbReference type="ChEBI" id="CHEBI:37565"/>
    </ligand>
</feature>
<feature type="splice variant" id="VSP_045196" description="In isoform 4." evidence="5">
    <location>
        <begin position="1"/>
        <end position="216"/>
    </location>
</feature>
<feature type="splice variant" id="VSP_006680" description="In isoform 3." evidence="5">
    <location>
        <begin position="58"/>
        <end position="311"/>
    </location>
</feature>
<feature type="splice variant" id="VSP_046949" description="In isoform 6." evidence="6">
    <location>
        <begin position="257"/>
        <end position="358"/>
    </location>
</feature>
<feature type="splice variant" id="VSP_006681" description="In isoform 2." evidence="7">
    <location>
        <begin position="257"/>
        <end position="311"/>
    </location>
</feature>
<feature type="splice variant" id="VSP_046950" description="In isoform 5." evidence="5">
    <original>VEGFKDPALYTSWLKPVNAFNVWKTQRAFSKYEKSAVLVSNSQFLVKPLDMIVGKAWNMFASK</original>
    <variation>VGKKFR</variation>
    <location>
        <begin position="358"/>
        <end position="420"/>
    </location>
</feature>
<feature type="sequence variant" id="VAR_030000" description="In dbSNP:rs1292053." evidence="3 4">
    <original>M</original>
    <variation>T</variation>
    <location>
        <position position="76"/>
    </location>
</feature>
<feature type="sequence conflict" description="In Ref. 3; BAG60700." evidence="8" ref="3">
    <original>C</original>
    <variation>R</variation>
    <location>
        <position position="130"/>
    </location>
</feature>
<feature type="sequence conflict" description="In Ref. 3; BAG60700." evidence="8" ref="3">
    <original>K</original>
    <variation>R</variation>
    <location>
        <position position="270"/>
    </location>
</feature>
<feature type="sequence conflict" description="In Ref. 3; BAB14825." evidence="8" ref="3">
    <original>N</original>
    <variation>D</variation>
    <location>
        <position position="398"/>
    </location>
</feature>